<name>RL18_FRAT1</name>
<organism>
    <name type="scientific">Francisella tularensis subsp. tularensis (strain FSC 198)</name>
    <dbReference type="NCBI Taxonomy" id="393115"/>
    <lineage>
        <taxon>Bacteria</taxon>
        <taxon>Pseudomonadati</taxon>
        <taxon>Pseudomonadota</taxon>
        <taxon>Gammaproteobacteria</taxon>
        <taxon>Thiotrichales</taxon>
        <taxon>Francisellaceae</taxon>
        <taxon>Francisella</taxon>
    </lineage>
</organism>
<proteinExistence type="inferred from homology"/>
<protein>
    <recommendedName>
        <fullName evidence="1">Large ribosomal subunit protein uL18</fullName>
    </recommendedName>
    <alternativeName>
        <fullName evidence="2">50S ribosomal protein L18</fullName>
    </alternativeName>
</protein>
<evidence type="ECO:0000255" key="1">
    <source>
        <dbReference type="HAMAP-Rule" id="MF_01337"/>
    </source>
</evidence>
<evidence type="ECO:0000305" key="2"/>
<sequence length="117" mass="13036">MDKKTARLSRSKRTRIKLRELGHTRLCVYRTPRHVYAQVISGDGSTVLVAASTVEKDVKAKCKYTGNVESAAIVGEIIADRCKEKGISQVAFDRSGYKYHGRVKALVEAAREHGLQF</sequence>
<comment type="function">
    <text evidence="1">This is one of the proteins that bind and probably mediate the attachment of the 5S RNA into the large ribosomal subunit, where it forms part of the central protuberance.</text>
</comment>
<comment type="subunit">
    <text evidence="1">Part of the 50S ribosomal subunit; part of the 5S rRNA/L5/L18/L25 subcomplex. Contacts the 5S and 23S rRNAs.</text>
</comment>
<comment type="similarity">
    <text evidence="1">Belongs to the universal ribosomal protein uL18 family.</text>
</comment>
<keyword id="KW-0687">Ribonucleoprotein</keyword>
<keyword id="KW-0689">Ribosomal protein</keyword>
<keyword id="KW-0694">RNA-binding</keyword>
<keyword id="KW-0699">rRNA-binding</keyword>
<gene>
    <name evidence="1" type="primary">rplR</name>
    <name type="ordered locus">FTF0341</name>
</gene>
<accession>Q14JA4</accession>
<feature type="chain" id="PRO_1000053025" description="Large ribosomal subunit protein uL18">
    <location>
        <begin position="1"/>
        <end position="117"/>
    </location>
</feature>
<dbReference type="EMBL" id="AM286280">
    <property type="protein sequence ID" value="CAL08357.1"/>
    <property type="molecule type" value="Genomic_DNA"/>
</dbReference>
<dbReference type="RefSeq" id="WP_003014360.1">
    <property type="nucleotide sequence ID" value="NC_008245.1"/>
</dbReference>
<dbReference type="SMR" id="Q14JA4"/>
<dbReference type="KEGG" id="ftf:FTF0341"/>
<dbReference type="HOGENOM" id="CLU_098841_0_1_6"/>
<dbReference type="GO" id="GO:0022625">
    <property type="term" value="C:cytosolic large ribosomal subunit"/>
    <property type="evidence" value="ECO:0007669"/>
    <property type="project" value="TreeGrafter"/>
</dbReference>
<dbReference type="GO" id="GO:0008097">
    <property type="term" value="F:5S rRNA binding"/>
    <property type="evidence" value="ECO:0007669"/>
    <property type="project" value="TreeGrafter"/>
</dbReference>
<dbReference type="GO" id="GO:0003735">
    <property type="term" value="F:structural constituent of ribosome"/>
    <property type="evidence" value="ECO:0007669"/>
    <property type="project" value="InterPro"/>
</dbReference>
<dbReference type="GO" id="GO:0006412">
    <property type="term" value="P:translation"/>
    <property type="evidence" value="ECO:0007669"/>
    <property type="project" value="UniProtKB-UniRule"/>
</dbReference>
<dbReference type="CDD" id="cd00432">
    <property type="entry name" value="Ribosomal_L18_L5e"/>
    <property type="match status" value="1"/>
</dbReference>
<dbReference type="FunFam" id="3.30.420.100:FF:000001">
    <property type="entry name" value="50S ribosomal protein L18"/>
    <property type="match status" value="1"/>
</dbReference>
<dbReference type="Gene3D" id="3.30.420.100">
    <property type="match status" value="1"/>
</dbReference>
<dbReference type="HAMAP" id="MF_01337_B">
    <property type="entry name" value="Ribosomal_uL18_B"/>
    <property type="match status" value="1"/>
</dbReference>
<dbReference type="InterPro" id="IPR004389">
    <property type="entry name" value="Ribosomal_uL18_bac-type"/>
</dbReference>
<dbReference type="InterPro" id="IPR005484">
    <property type="entry name" value="Ribosomal_uL18_bac/euk"/>
</dbReference>
<dbReference type="NCBIfam" id="TIGR00060">
    <property type="entry name" value="L18_bact"/>
    <property type="match status" value="1"/>
</dbReference>
<dbReference type="PANTHER" id="PTHR12899">
    <property type="entry name" value="39S RIBOSOMAL PROTEIN L18, MITOCHONDRIAL"/>
    <property type="match status" value="1"/>
</dbReference>
<dbReference type="PANTHER" id="PTHR12899:SF3">
    <property type="entry name" value="LARGE RIBOSOMAL SUBUNIT PROTEIN UL18M"/>
    <property type="match status" value="1"/>
</dbReference>
<dbReference type="Pfam" id="PF00861">
    <property type="entry name" value="Ribosomal_L18p"/>
    <property type="match status" value="1"/>
</dbReference>
<dbReference type="SUPFAM" id="SSF53137">
    <property type="entry name" value="Translational machinery components"/>
    <property type="match status" value="1"/>
</dbReference>
<reference key="1">
    <citation type="journal article" date="2007" name="PLoS ONE">
        <title>Genome sequencing shows that European isolates of Francisella tularensis subspecies tularensis are almost identical to US laboratory strain Schu S4.</title>
        <authorList>
            <person name="Chaudhuri R.R."/>
            <person name="Ren C.-P."/>
            <person name="Desmond L."/>
            <person name="Vincent G.A."/>
            <person name="Silman N.J."/>
            <person name="Brehm J.K."/>
            <person name="Elmore M.J."/>
            <person name="Hudson M.J."/>
            <person name="Forsman M."/>
            <person name="Isherwood K.E."/>
            <person name="Gurycova D."/>
            <person name="Minton N.P."/>
            <person name="Titball R.W."/>
            <person name="Pallen M.J."/>
            <person name="Vipond R."/>
        </authorList>
    </citation>
    <scope>NUCLEOTIDE SEQUENCE [LARGE SCALE GENOMIC DNA]</scope>
    <source>
        <strain>FSC 198</strain>
    </source>
</reference>